<sequence length="225" mass="24877">MAQSDFLYPENPKRREEVNRLHQQLLDCLSDSFDVTNKLTEVLNMHLGCRLASIEMKRDGTIKENCDLIIQAIMKIQKELQKVDEALKDKLEPTLYRKLQDIKEKETDKIAIVQKVISVILGEATSAASAVAVKLVGSNVTTGIINKLVTVLAQIGASLLGSIGVAVLGLGIDMIVRAILGAVEKTQLQAAIKSYEKHLVEFKSASEKYNHAITEVINTVKHQMK</sequence>
<gene>
    <name type="primary">SMCO3</name>
    <name type="synonym">C12orf69</name>
</gene>
<protein>
    <recommendedName>
        <fullName>Single-pass membrane and coiled-coil domain-containing protein 3</fullName>
    </recommendedName>
</protein>
<comment type="interaction">
    <interactant intactId="EBI-10173195">
        <id>A2RU48</id>
    </interactant>
    <interactant intactId="EBI-713568">
        <id>P45984</id>
        <label>MAPK9</label>
    </interactant>
    <organismsDiffer>false</organismsDiffer>
    <experiments>6</experiments>
</comment>
<comment type="interaction">
    <interactant intactId="EBI-10173195">
        <id>A2RU48</id>
    </interactant>
    <interactant intactId="EBI-357793">
        <id>P60900</id>
        <label>PSMA6</label>
    </interactant>
    <organismsDiffer>false</organismsDiffer>
    <experiments>3</experiments>
</comment>
<comment type="interaction">
    <interactant intactId="EBI-10173195">
        <id>A2RU48</id>
    </interactant>
    <interactant intactId="EBI-739510">
        <id>Q9HCM9</id>
        <label>TRIM39</label>
    </interactant>
    <organismsDiffer>false</organismsDiffer>
    <experiments>3</experiments>
</comment>
<comment type="subcellular location">
    <subcellularLocation>
        <location evidence="2">Membrane</location>
        <topology evidence="2">Single-pass membrane protein</topology>
    </subcellularLocation>
</comment>
<comment type="sequence caution" evidence="2">
    <conflict type="frameshift">
        <sequence resource="EMBL-CDS" id="BAC03930"/>
    </conflict>
</comment>
<reference key="1">
    <citation type="journal article" date="2004" name="Nat. Genet.">
        <title>Complete sequencing and characterization of 21,243 full-length human cDNAs.</title>
        <authorList>
            <person name="Ota T."/>
            <person name="Suzuki Y."/>
            <person name="Nishikawa T."/>
            <person name="Otsuki T."/>
            <person name="Sugiyama T."/>
            <person name="Irie R."/>
            <person name="Wakamatsu A."/>
            <person name="Hayashi K."/>
            <person name="Sato H."/>
            <person name="Nagai K."/>
            <person name="Kimura K."/>
            <person name="Makita H."/>
            <person name="Sekine M."/>
            <person name="Obayashi M."/>
            <person name="Nishi T."/>
            <person name="Shibahara T."/>
            <person name="Tanaka T."/>
            <person name="Ishii S."/>
            <person name="Yamamoto J."/>
            <person name="Saito K."/>
            <person name="Kawai Y."/>
            <person name="Isono Y."/>
            <person name="Nakamura Y."/>
            <person name="Nagahari K."/>
            <person name="Murakami K."/>
            <person name="Yasuda T."/>
            <person name="Iwayanagi T."/>
            <person name="Wagatsuma M."/>
            <person name="Shiratori A."/>
            <person name="Sudo H."/>
            <person name="Hosoiri T."/>
            <person name="Kaku Y."/>
            <person name="Kodaira H."/>
            <person name="Kondo H."/>
            <person name="Sugawara M."/>
            <person name="Takahashi M."/>
            <person name="Kanda K."/>
            <person name="Yokoi T."/>
            <person name="Furuya T."/>
            <person name="Kikkawa E."/>
            <person name="Omura Y."/>
            <person name="Abe K."/>
            <person name="Kamihara K."/>
            <person name="Katsuta N."/>
            <person name="Sato K."/>
            <person name="Tanikawa M."/>
            <person name="Yamazaki M."/>
            <person name="Ninomiya K."/>
            <person name="Ishibashi T."/>
            <person name="Yamashita H."/>
            <person name="Murakawa K."/>
            <person name="Fujimori K."/>
            <person name="Tanai H."/>
            <person name="Kimata M."/>
            <person name="Watanabe M."/>
            <person name="Hiraoka S."/>
            <person name="Chiba Y."/>
            <person name="Ishida S."/>
            <person name="Ono Y."/>
            <person name="Takiguchi S."/>
            <person name="Watanabe S."/>
            <person name="Yosida M."/>
            <person name="Hotuta T."/>
            <person name="Kusano J."/>
            <person name="Kanehori K."/>
            <person name="Takahashi-Fujii A."/>
            <person name="Hara H."/>
            <person name="Tanase T.-O."/>
            <person name="Nomura Y."/>
            <person name="Togiya S."/>
            <person name="Komai F."/>
            <person name="Hara R."/>
            <person name="Takeuchi K."/>
            <person name="Arita M."/>
            <person name="Imose N."/>
            <person name="Musashino K."/>
            <person name="Yuuki H."/>
            <person name="Oshima A."/>
            <person name="Sasaki N."/>
            <person name="Aotsuka S."/>
            <person name="Yoshikawa Y."/>
            <person name="Matsunawa H."/>
            <person name="Ichihara T."/>
            <person name="Shiohata N."/>
            <person name="Sano S."/>
            <person name="Moriya S."/>
            <person name="Momiyama H."/>
            <person name="Satoh N."/>
            <person name="Takami S."/>
            <person name="Terashima Y."/>
            <person name="Suzuki O."/>
            <person name="Nakagawa S."/>
            <person name="Senoh A."/>
            <person name="Mizoguchi H."/>
            <person name="Goto Y."/>
            <person name="Shimizu F."/>
            <person name="Wakebe H."/>
            <person name="Hishigaki H."/>
            <person name="Watanabe T."/>
            <person name="Sugiyama A."/>
            <person name="Takemoto M."/>
            <person name="Kawakami B."/>
            <person name="Yamazaki M."/>
            <person name="Watanabe K."/>
            <person name="Kumagai A."/>
            <person name="Itakura S."/>
            <person name="Fukuzumi Y."/>
            <person name="Fujimori Y."/>
            <person name="Komiyama M."/>
            <person name="Tashiro H."/>
            <person name="Tanigami A."/>
            <person name="Fujiwara T."/>
            <person name="Ono T."/>
            <person name="Yamada K."/>
            <person name="Fujii Y."/>
            <person name="Ozaki K."/>
            <person name="Hirao M."/>
            <person name="Ohmori Y."/>
            <person name="Kawabata A."/>
            <person name="Hikiji T."/>
            <person name="Kobatake N."/>
            <person name="Inagaki H."/>
            <person name="Ikema Y."/>
            <person name="Okamoto S."/>
            <person name="Okitani R."/>
            <person name="Kawakami T."/>
            <person name="Noguchi S."/>
            <person name="Itoh T."/>
            <person name="Shigeta K."/>
            <person name="Senba T."/>
            <person name="Matsumura K."/>
            <person name="Nakajima Y."/>
            <person name="Mizuno T."/>
            <person name="Morinaga M."/>
            <person name="Sasaki M."/>
            <person name="Togashi T."/>
            <person name="Oyama M."/>
            <person name="Hata H."/>
            <person name="Watanabe M."/>
            <person name="Komatsu T."/>
            <person name="Mizushima-Sugano J."/>
            <person name="Satoh T."/>
            <person name="Shirai Y."/>
            <person name="Takahashi Y."/>
            <person name="Nakagawa K."/>
            <person name="Okumura K."/>
            <person name="Nagase T."/>
            <person name="Nomura N."/>
            <person name="Kikuchi H."/>
            <person name="Masuho Y."/>
            <person name="Yamashita R."/>
            <person name="Nakai K."/>
            <person name="Yada T."/>
            <person name="Nakamura Y."/>
            <person name="Ohara O."/>
            <person name="Isogai T."/>
            <person name="Sugano S."/>
        </authorList>
    </citation>
    <scope>NUCLEOTIDE SEQUENCE [LARGE SCALE MRNA]</scope>
    <source>
        <tissue>Prostate</tissue>
    </source>
</reference>
<reference key="2">
    <citation type="journal article" date="2006" name="Nature">
        <title>The finished DNA sequence of human chromosome 12.</title>
        <authorList>
            <person name="Scherer S.E."/>
            <person name="Muzny D.M."/>
            <person name="Buhay C.J."/>
            <person name="Chen R."/>
            <person name="Cree A."/>
            <person name="Ding Y."/>
            <person name="Dugan-Rocha S."/>
            <person name="Gill R."/>
            <person name="Gunaratne P."/>
            <person name="Harris R.A."/>
            <person name="Hawes A.C."/>
            <person name="Hernandez J."/>
            <person name="Hodgson A.V."/>
            <person name="Hume J."/>
            <person name="Jackson A."/>
            <person name="Khan Z.M."/>
            <person name="Kovar-Smith C."/>
            <person name="Lewis L.R."/>
            <person name="Lozado R.J."/>
            <person name="Metzker M.L."/>
            <person name="Milosavljevic A."/>
            <person name="Miner G.R."/>
            <person name="Montgomery K.T."/>
            <person name="Morgan M.B."/>
            <person name="Nazareth L.V."/>
            <person name="Scott G."/>
            <person name="Sodergren E."/>
            <person name="Song X.-Z."/>
            <person name="Steffen D."/>
            <person name="Lovering R.C."/>
            <person name="Wheeler D.A."/>
            <person name="Worley K.C."/>
            <person name="Yuan Y."/>
            <person name="Zhang Z."/>
            <person name="Adams C.Q."/>
            <person name="Ansari-Lari M.A."/>
            <person name="Ayele M."/>
            <person name="Brown M.J."/>
            <person name="Chen G."/>
            <person name="Chen Z."/>
            <person name="Clerc-Blankenburg K.P."/>
            <person name="Davis C."/>
            <person name="Delgado O."/>
            <person name="Dinh H.H."/>
            <person name="Draper H."/>
            <person name="Gonzalez-Garay M.L."/>
            <person name="Havlak P."/>
            <person name="Jackson L.R."/>
            <person name="Jacob L.S."/>
            <person name="Kelly S.H."/>
            <person name="Li L."/>
            <person name="Li Z."/>
            <person name="Liu J."/>
            <person name="Liu W."/>
            <person name="Lu J."/>
            <person name="Maheshwari M."/>
            <person name="Nguyen B.-V."/>
            <person name="Okwuonu G.O."/>
            <person name="Pasternak S."/>
            <person name="Perez L.M."/>
            <person name="Plopper F.J.H."/>
            <person name="Santibanez J."/>
            <person name="Shen H."/>
            <person name="Tabor P.E."/>
            <person name="Verduzco D."/>
            <person name="Waldron L."/>
            <person name="Wang Q."/>
            <person name="Williams G.A."/>
            <person name="Zhang J."/>
            <person name="Zhou J."/>
            <person name="Allen C.C."/>
            <person name="Amin A.G."/>
            <person name="Anyalebechi V."/>
            <person name="Bailey M."/>
            <person name="Barbaria J.A."/>
            <person name="Bimage K.E."/>
            <person name="Bryant N.P."/>
            <person name="Burch P.E."/>
            <person name="Burkett C.E."/>
            <person name="Burrell K.L."/>
            <person name="Calderon E."/>
            <person name="Cardenas V."/>
            <person name="Carter K."/>
            <person name="Casias K."/>
            <person name="Cavazos I."/>
            <person name="Cavazos S.R."/>
            <person name="Ceasar H."/>
            <person name="Chacko J."/>
            <person name="Chan S.N."/>
            <person name="Chavez D."/>
            <person name="Christopoulos C."/>
            <person name="Chu J."/>
            <person name="Cockrell R."/>
            <person name="Cox C.D."/>
            <person name="Dang M."/>
            <person name="Dathorne S.R."/>
            <person name="David R."/>
            <person name="Davis C.M."/>
            <person name="Davy-Carroll L."/>
            <person name="Deshazo D.R."/>
            <person name="Donlin J.E."/>
            <person name="D'Souza L."/>
            <person name="Eaves K.A."/>
            <person name="Egan A."/>
            <person name="Emery-Cohen A.J."/>
            <person name="Escotto M."/>
            <person name="Flagg N."/>
            <person name="Forbes L.D."/>
            <person name="Gabisi A.M."/>
            <person name="Garza M."/>
            <person name="Hamilton C."/>
            <person name="Henderson N."/>
            <person name="Hernandez O."/>
            <person name="Hines S."/>
            <person name="Hogues M.E."/>
            <person name="Huang M."/>
            <person name="Idlebird D.G."/>
            <person name="Johnson R."/>
            <person name="Jolivet A."/>
            <person name="Jones S."/>
            <person name="Kagan R."/>
            <person name="King L.M."/>
            <person name="Leal B."/>
            <person name="Lebow H."/>
            <person name="Lee S."/>
            <person name="LeVan J.M."/>
            <person name="Lewis L.C."/>
            <person name="London P."/>
            <person name="Lorensuhewa L.M."/>
            <person name="Loulseged H."/>
            <person name="Lovett D.A."/>
            <person name="Lucier A."/>
            <person name="Lucier R.L."/>
            <person name="Ma J."/>
            <person name="Madu R.C."/>
            <person name="Mapua P."/>
            <person name="Martindale A.D."/>
            <person name="Martinez E."/>
            <person name="Massey E."/>
            <person name="Mawhiney S."/>
            <person name="Meador M.G."/>
            <person name="Mendez S."/>
            <person name="Mercado C."/>
            <person name="Mercado I.C."/>
            <person name="Merritt C.E."/>
            <person name="Miner Z.L."/>
            <person name="Minja E."/>
            <person name="Mitchell T."/>
            <person name="Mohabbat F."/>
            <person name="Mohabbat K."/>
            <person name="Montgomery B."/>
            <person name="Moore N."/>
            <person name="Morris S."/>
            <person name="Munidasa M."/>
            <person name="Ngo R.N."/>
            <person name="Nguyen N.B."/>
            <person name="Nickerson E."/>
            <person name="Nwaokelemeh O.O."/>
            <person name="Nwokenkwo S."/>
            <person name="Obregon M."/>
            <person name="Oguh M."/>
            <person name="Oragunye N."/>
            <person name="Oviedo R.J."/>
            <person name="Parish B.J."/>
            <person name="Parker D.N."/>
            <person name="Parrish J."/>
            <person name="Parks K.L."/>
            <person name="Paul H.A."/>
            <person name="Payton B.A."/>
            <person name="Perez A."/>
            <person name="Perrin W."/>
            <person name="Pickens A."/>
            <person name="Primus E.L."/>
            <person name="Pu L.-L."/>
            <person name="Puazo M."/>
            <person name="Quiles M.M."/>
            <person name="Quiroz J.B."/>
            <person name="Rabata D."/>
            <person name="Reeves K."/>
            <person name="Ruiz S.J."/>
            <person name="Shao H."/>
            <person name="Sisson I."/>
            <person name="Sonaike T."/>
            <person name="Sorelle R.P."/>
            <person name="Sutton A.E."/>
            <person name="Svatek A.F."/>
            <person name="Svetz L.A."/>
            <person name="Tamerisa K.S."/>
            <person name="Taylor T.R."/>
            <person name="Teague B."/>
            <person name="Thomas N."/>
            <person name="Thorn R.D."/>
            <person name="Trejos Z.Y."/>
            <person name="Trevino B.K."/>
            <person name="Ukegbu O.N."/>
            <person name="Urban J.B."/>
            <person name="Vasquez L.I."/>
            <person name="Vera V.A."/>
            <person name="Villasana D.M."/>
            <person name="Wang L."/>
            <person name="Ward-Moore S."/>
            <person name="Warren J.T."/>
            <person name="Wei X."/>
            <person name="White F."/>
            <person name="Williamson A.L."/>
            <person name="Wleczyk R."/>
            <person name="Wooden H.S."/>
            <person name="Wooden S.H."/>
            <person name="Yen J."/>
            <person name="Yoon L."/>
            <person name="Yoon V."/>
            <person name="Zorrilla S.E."/>
            <person name="Nelson D."/>
            <person name="Kucherlapati R."/>
            <person name="Weinstock G."/>
            <person name="Gibbs R.A."/>
        </authorList>
    </citation>
    <scope>NUCLEOTIDE SEQUENCE [LARGE SCALE GENOMIC DNA]</scope>
</reference>
<reference key="3">
    <citation type="submission" date="2005-07" db="EMBL/GenBank/DDBJ databases">
        <authorList>
            <person name="Mural R.J."/>
            <person name="Istrail S."/>
            <person name="Sutton G.G."/>
            <person name="Florea L."/>
            <person name="Halpern A.L."/>
            <person name="Mobarry C.M."/>
            <person name="Lippert R."/>
            <person name="Walenz B."/>
            <person name="Shatkay H."/>
            <person name="Dew I."/>
            <person name="Miller J.R."/>
            <person name="Flanigan M.J."/>
            <person name="Edwards N.J."/>
            <person name="Bolanos R."/>
            <person name="Fasulo D."/>
            <person name="Halldorsson B.V."/>
            <person name="Hannenhalli S."/>
            <person name="Turner R."/>
            <person name="Yooseph S."/>
            <person name="Lu F."/>
            <person name="Nusskern D.R."/>
            <person name="Shue B.C."/>
            <person name="Zheng X.H."/>
            <person name="Zhong F."/>
            <person name="Delcher A.L."/>
            <person name="Huson D.H."/>
            <person name="Kravitz S.A."/>
            <person name="Mouchard L."/>
            <person name="Reinert K."/>
            <person name="Remington K.A."/>
            <person name="Clark A.G."/>
            <person name="Waterman M.S."/>
            <person name="Eichler E.E."/>
            <person name="Adams M.D."/>
            <person name="Hunkapiller M.W."/>
            <person name="Myers E.W."/>
            <person name="Venter J.C."/>
        </authorList>
    </citation>
    <scope>NUCLEOTIDE SEQUENCE [LARGE SCALE GENOMIC DNA]</scope>
</reference>
<reference key="4">
    <citation type="journal article" date="2004" name="Genome Res.">
        <title>The status, quality, and expansion of the NIH full-length cDNA project: the Mammalian Gene Collection (MGC).</title>
        <authorList>
            <consortium name="The MGC Project Team"/>
        </authorList>
    </citation>
    <scope>NUCLEOTIDE SEQUENCE [LARGE SCALE MRNA]</scope>
</reference>
<dbReference type="EMBL" id="AK092637">
    <property type="protein sequence ID" value="BAC03930.1"/>
    <property type="status" value="ALT_FRAME"/>
    <property type="molecule type" value="mRNA"/>
</dbReference>
<dbReference type="EMBL" id="AC007655">
    <property type="status" value="NOT_ANNOTATED_CDS"/>
    <property type="molecule type" value="Genomic_DNA"/>
</dbReference>
<dbReference type="EMBL" id="BC132752">
    <property type="protein sequence ID" value="AAI32753.1"/>
    <property type="molecule type" value="mRNA"/>
</dbReference>
<dbReference type="EMBL" id="BC132754">
    <property type="protein sequence ID" value="AAI32755.1"/>
    <property type="molecule type" value="mRNA"/>
</dbReference>
<dbReference type="EMBL" id="CH471094">
    <property type="protein sequence ID" value="EAW96331.1"/>
    <property type="molecule type" value="Genomic_DNA"/>
</dbReference>
<dbReference type="CCDS" id="CCDS41759.1"/>
<dbReference type="RefSeq" id="NP_001013720.2">
    <property type="nucleotide sequence ID" value="NM_001013698.2"/>
</dbReference>
<dbReference type="RefSeq" id="XP_016874801.1">
    <property type="nucleotide sequence ID" value="XM_017019312.2"/>
</dbReference>
<dbReference type="RefSeq" id="XP_054228052.1">
    <property type="nucleotide sequence ID" value="XM_054372077.1"/>
</dbReference>
<dbReference type="SMR" id="A2RU48"/>
<dbReference type="BioGRID" id="136283">
    <property type="interactions" value="6"/>
</dbReference>
<dbReference type="FunCoup" id="A2RU48">
    <property type="interactions" value="54"/>
</dbReference>
<dbReference type="IntAct" id="A2RU48">
    <property type="interactions" value="7"/>
</dbReference>
<dbReference type="STRING" id="9606.ENSP00000381895"/>
<dbReference type="GlyGen" id="A2RU48">
    <property type="glycosylation" value="1 site, 1 O-linked glycan (1 site)"/>
</dbReference>
<dbReference type="iPTMnet" id="A2RU48"/>
<dbReference type="PhosphoSitePlus" id="A2RU48"/>
<dbReference type="BioMuta" id="SMCO3"/>
<dbReference type="MassIVE" id="A2RU48"/>
<dbReference type="PaxDb" id="9606-ENSP00000381895"/>
<dbReference type="PeptideAtlas" id="A2RU48"/>
<dbReference type="Antibodypedia" id="65695">
    <property type="antibodies" value="47 antibodies from 14 providers"/>
</dbReference>
<dbReference type="DNASU" id="440087"/>
<dbReference type="Ensembl" id="ENST00000316048.2">
    <property type="protein sequence ID" value="ENSP00000381895.1"/>
    <property type="gene ID" value="ENSG00000179256.2"/>
</dbReference>
<dbReference type="GeneID" id="440087"/>
<dbReference type="KEGG" id="hsa:440087"/>
<dbReference type="MANE-Select" id="ENST00000316048.2">
    <property type="protein sequence ID" value="ENSP00000381895.1"/>
    <property type="RefSeq nucleotide sequence ID" value="NM_001013698.2"/>
    <property type="RefSeq protein sequence ID" value="NP_001013720.2"/>
</dbReference>
<dbReference type="UCSC" id="uc001rck.1">
    <property type="organism name" value="human"/>
</dbReference>
<dbReference type="AGR" id="HGNC:34401"/>
<dbReference type="CTD" id="440087"/>
<dbReference type="DisGeNET" id="440087"/>
<dbReference type="GeneCards" id="SMCO3"/>
<dbReference type="HGNC" id="HGNC:34401">
    <property type="gene designation" value="SMCO3"/>
</dbReference>
<dbReference type="HPA" id="ENSG00000179256">
    <property type="expression patterns" value="Tissue enhanced (cervix, kidney)"/>
</dbReference>
<dbReference type="neXtProt" id="NX_A2RU48"/>
<dbReference type="OpenTargets" id="ENSG00000179256"/>
<dbReference type="PharmGKB" id="PA162378005"/>
<dbReference type="VEuPathDB" id="HostDB:ENSG00000179256"/>
<dbReference type="eggNOG" id="ENOG502RYUI">
    <property type="taxonomic scope" value="Eukaryota"/>
</dbReference>
<dbReference type="GeneTree" id="ENSGT00390000013440"/>
<dbReference type="HOGENOM" id="CLU_1229530_0_0_1"/>
<dbReference type="InParanoid" id="A2RU48"/>
<dbReference type="OMA" id="MSTNFHA"/>
<dbReference type="OrthoDB" id="6112619at2759"/>
<dbReference type="PAN-GO" id="A2RU48">
    <property type="GO annotations" value="0 GO annotations based on evolutionary models"/>
</dbReference>
<dbReference type="PhylomeDB" id="A2RU48"/>
<dbReference type="TreeFam" id="TF335698"/>
<dbReference type="PathwayCommons" id="A2RU48"/>
<dbReference type="SignaLink" id="A2RU48"/>
<dbReference type="BioGRID-ORCS" id="440087">
    <property type="hits" value="10 hits in 1134 CRISPR screens"/>
</dbReference>
<dbReference type="GenomeRNAi" id="440087"/>
<dbReference type="Pharos" id="A2RU48">
    <property type="development level" value="Tdark"/>
</dbReference>
<dbReference type="PRO" id="PR:A2RU48"/>
<dbReference type="Proteomes" id="UP000005640">
    <property type="component" value="Chromosome 12"/>
</dbReference>
<dbReference type="RNAct" id="A2RU48">
    <property type="molecule type" value="protein"/>
</dbReference>
<dbReference type="Bgee" id="ENSG00000179256">
    <property type="expression patterns" value="Expressed in male germ line stem cell (sensu Vertebrata) in testis and 84 other cell types or tissues"/>
</dbReference>
<dbReference type="GO" id="GO:0016020">
    <property type="term" value="C:membrane"/>
    <property type="evidence" value="ECO:0007669"/>
    <property type="project" value="UniProtKB-SubCell"/>
</dbReference>
<dbReference type="InterPro" id="IPR027895">
    <property type="entry name" value="DUF4533"/>
</dbReference>
<dbReference type="InterPro" id="IPR040004">
    <property type="entry name" value="SMCO3"/>
</dbReference>
<dbReference type="PANTHER" id="PTHR35972">
    <property type="entry name" value="SINGLE-PASS MEMBRANE AND COILED-COIL DOMAIN-CONTAINING PROTEIN 3"/>
    <property type="match status" value="1"/>
</dbReference>
<dbReference type="PANTHER" id="PTHR35972:SF1">
    <property type="entry name" value="SINGLE-PASS MEMBRANE AND COILED-COIL DOMAIN-CONTAINING PROTEIN 3"/>
    <property type="match status" value="1"/>
</dbReference>
<dbReference type="Pfam" id="PF15047">
    <property type="entry name" value="DUF4533"/>
    <property type="match status" value="2"/>
</dbReference>
<feature type="chain" id="PRO_0000336988" description="Single-pass membrane and coiled-coil domain-containing protein 3">
    <location>
        <begin position="1"/>
        <end position="225"/>
    </location>
</feature>
<feature type="transmembrane region" description="Helical" evidence="1">
    <location>
        <begin position="155"/>
        <end position="175"/>
    </location>
</feature>
<feature type="coiled-coil region" evidence="1">
    <location>
        <begin position="62"/>
        <end position="92"/>
    </location>
</feature>
<feature type="coiled-coil region" evidence="1">
    <location>
        <begin position="183"/>
        <end position="207"/>
    </location>
</feature>
<feature type="sequence variant" id="VAR_043558" description="In dbSNP:rs11609202.">
    <original>C</original>
    <variation>R</variation>
    <location>
        <position position="49"/>
    </location>
</feature>
<feature type="sequence variant" id="VAR_043559" description="In dbSNP:rs2241221.">
    <original>K</original>
    <variation>R</variation>
    <location>
        <position position="75"/>
    </location>
</feature>
<proteinExistence type="evidence at protein level"/>
<evidence type="ECO:0000255" key="1"/>
<evidence type="ECO:0000305" key="2"/>
<organism>
    <name type="scientific">Homo sapiens</name>
    <name type="common">Human</name>
    <dbReference type="NCBI Taxonomy" id="9606"/>
    <lineage>
        <taxon>Eukaryota</taxon>
        <taxon>Metazoa</taxon>
        <taxon>Chordata</taxon>
        <taxon>Craniata</taxon>
        <taxon>Vertebrata</taxon>
        <taxon>Euteleostomi</taxon>
        <taxon>Mammalia</taxon>
        <taxon>Eutheria</taxon>
        <taxon>Euarchontoglires</taxon>
        <taxon>Primates</taxon>
        <taxon>Haplorrhini</taxon>
        <taxon>Catarrhini</taxon>
        <taxon>Hominidae</taxon>
        <taxon>Homo</taxon>
    </lineage>
</organism>
<keyword id="KW-0175">Coiled coil</keyword>
<keyword id="KW-0472">Membrane</keyword>
<keyword id="KW-1267">Proteomics identification</keyword>
<keyword id="KW-1185">Reference proteome</keyword>
<keyword id="KW-0812">Transmembrane</keyword>
<keyword id="KW-1133">Transmembrane helix</keyword>
<name>SMCO3_HUMAN</name>
<accession>A2RU48</accession>
<accession>Q8NAI5</accession>